<organism>
    <name type="scientific">Syntrophotalea carbinolica (strain DSM 2380 / NBRC 103641 / GraBd1)</name>
    <name type="common">Pelobacter carbinolicus</name>
    <dbReference type="NCBI Taxonomy" id="338963"/>
    <lineage>
        <taxon>Bacteria</taxon>
        <taxon>Pseudomonadati</taxon>
        <taxon>Thermodesulfobacteriota</taxon>
        <taxon>Desulfuromonadia</taxon>
        <taxon>Desulfuromonadales</taxon>
        <taxon>Syntrophotaleaceae</taxon>
        <taxon>Syntrophotalea</taxon>
    </lineage>
</organism>
<protein>
    <recommendedName>
        <fullName evidence="1">S-adenosylmethionine synthase</fullName>
        <shortName evidence="1">AdoMet synthase</shortName>
        <ecNumber evidence="1">2.5.1.6</ecNumber>
    </recommendedName>
    <alternativeName>
        <fullName evidence="1">MAT</fullName>
    </alternativeName>
    <alternativeName>
        <fullName evidence="1">Methionine adenosyltransferase</fullName>
    </alternativeName>
</protein>
<keyword id="KW-0067">ATP-binding</keyword>
<keyword id="KW-0963">Cytoplasm</keyword>
<keyword id="KW-0460">Magnesium</keyword>
<keyword id="KW-0479">Metal-binding</keyword>
<keyword id="KW-0547">Nucleotide-binding</keyword>
<keyword id="KW-0554">One-carbon metabolism</keyword>
<keyword id="KW-0630">Potassium</keyword>
<keyword id="KW-1185">Reference proteome</keyword>
<keyword id="KW-0808">Transferase</keyword>
<gene>
    <name evidence="1" type="primary">metK</name>
    <name type="ordered locus">Pcar_1928</name>
</gene>
<proteinExistence type="inferred from homology"/>
<feature type="chain" id="PRO_0000241013" description="S-adenosylmethionine synthase">
    <location>
        <begin position="1"/>
        <end position="389"/>
    </location>
</feature>
<feature type="region of interest" description="Flexible loop" evidence="1">
    <location>
        <begin position="101"/>
        <end position="111"/>
    </location>
</feature>
<feature type="binding site" description="in other chain" evidence="1">
    <location>
        <position position="17"/>
    </location>
    <ligand>
        <name>ATP</name>
        <dbReference type="ChEBI" id="CHEBI:30616"/>
        <note>ligand shared between two neighboring subunits</note>
    </ligand>
</feature>
<feature type="binding site" evidence="1">
    <location>
        <position position="19"/>
    </location>
    <ligand>
        <name>Mg(2+)</name>
        <dbReference type="ChEBI" id="CHEBI:18420"/>
    </ligand>
</feature>
<feature type="binding site" evidence="1">
    <location>
        <position position="45"/>
    </location>
    <ligand>
        <name>K(+)</name>
        <dbReference type="ChEBI" id="CHEBI:29103"/>
    </ligand>
</feature>
<feature type="binding site" description="in other chain" evidence="1">
    <location>
        <position position="58"/>
    </location>
    <ligand>
        <name>L-methionine</name>
        <dbReference type="ChEBI" id="CHEBI:57844"/>
        <note>ligand shared between two neighboring subunits</note>
    </ligand>
</feature>
<feature type="binding site" description="in other chain" evidence="1">
    <location>
        <position position="101"/>
    </location>
    <ligand>
        <name>L-methionine</name>
        <dbReference type="ChEBI" id="CHEBI:57844"/>
        <note>ligand shared between two neighboring subunits</note>
    </ligand>
</feature>
<feature type="binding site" description="in other chain" evidence="1">
    <location>
        <begin position="168"/>
        <end position="170"/>
    </location>
    <ligand>
        <name>ATP</name>
        <dbReference type="ChEBI" id="CHEBI:30616"/>
        <note>ligand shared between two neighboring subunits</note>
    </ligand>
</feature>
<feature type="binding site" description="in other chain" evidence="1">
    <location>
        <begin position="234"/>
        <end position="235"/>
    </location>
    <ligand>
        <name>ATP</name>
        <dbReference type="ChEBI" id="CHEBI:30616"/>
        <note>ligand shared between two neighboring subunits</note>
    </ligand>
</feature>
<feature type="binding site" evidence="1">
    <location>
        <position position="243"/>
    </location>
    <ligand>
        <name>ATP</name>
        <dbReference type="ChEBI" id="CHEBI:30616"/>
        <note>ligand shared between two neighboring subunits</note>
    </ligand>
</feature>
<feature type="binding site" evidence="1">
    <location>
        <position position="243"/>
    </location>
    <ligand>
        <name>L-methionine</name>
        <dbReference type="ChEBI" id="CHEBI:57844"/>
        <note>ligand shared between two neighboring subunits</note>
    </ligand>
</feature>
<feature type="binding site" description="in other chain" evidence="1">
    <location>
        <begin position="249"/>
        <end position="250"/>
    </location>
    <ligand>
        <name>ATP</name>
        <dbReference type="ChEBI" id="CHEBI:30616"/>
        <note>ligand shared between two neighboring subunits</note>
    </ligand>
</feature>
<feature type="binding site" evidence="1">
    <location>
        <position position="266"/>
    </location>
    <ligand>
        <name>ATP</name>
        <dbReference type="ChEBI" id="CHEBI:30616"/>
        <note>ligand shared between two neighboring subunits</note>
    </ligand>
</feature>
<feature type="binding site" evidence="1">
    <location>
        <position position="270"/>
    </location>
    <ligand>
        <name>ATP</name>
        <dbReference type="ChEBI" id="CHEBI:30616"/>
        <note>ligand shared between two neighboring subunits</note>
    </ligand>
</feature>
<feature type="binding site" description="in other chain" evidence="1">
    <location>
        <position position="274"/>
    </location>
    <ligand>
        <name>L-methionine</name>
        <dbReference type="ChEBI" id="CHEBI:57844"/>
        <note>ligand shared between two neighboring subunits</note>
    </ligand>
</feature>
<accession>Q3A388</accession>
<sequence>MPMTDFLFTSESVSEGHPDKVADQVSDAILDAILDQDRQSRVACETMVTTGMAVIAGEITTNARVEYPKVVREVIRDIGYNDSAMGFDWETCAVLTSIDRQSPDISQGVTEGAGLFKEQGAGDQGLMFGYACDETSVLMPMPITYAHQLTQRMSEVRKSGLLTFLRPDSKSQVSVQYINDKPVRVDTVVVSSQHAPDVAYETLREALIEEVIKKVVPADMLDENTKFYVNPTGRFVVGGPQGDCGLTGRKIIVDTYGGQGSHGGGAFSGKDPSKVDRSASYMARYVAKNVVAAKLARKCEVQIAYAIGVAEPVSIMVNTFGTGVLPSNEIARIVREEFDMRPAAIIETLDLLRPIYRKTAAYGHFGRELPEFTWERTDRVDSLRGRAGL</sequence>
<name>METK_SYNC1</name>
<reference key="1">
    <citation type="submission" date="2005-10" db="EMBL/GenBank/DDBJ databases">
        <title>Complete sequence of Pelobacter carbinolicus DSM 2380.</title>
        <authorList>
            <person name="Copeland A."/>
            <person name="Lucas S."/>
            <person name="Lapidus A."/>
            <person name="Barry K."/>
            <person name="Detter J.C."/>
            <person name="Glavina T."/>
            <person name="Hammon N."/>
            <person name="Israni S."/>
            <person name="Pitluck S."/>
            <person name="Chertkov O."/>
            <person name="Schmutz J."/>
            <person name="Larimer F."/>
            <person name="Land M."/>
            <person name="Kyrpides N."/>
            <person name="Ivanova N."/>
            <person name="Richardson P."/>
        </authorList>
    </citation>
    <scope>NUCLEOTIDE SEQUENCE [LARGE SCALE GENOMIC DNA]</scope>
    <source>
        <strain>DSM 2380 / NBRC 103641 / GraBd1</strain>
    </source>
</reference>
<comment type="function">
    <text evidence="1">Catalyzes the formation of S-adenosylmethionine (AdoMet) from methionine and ATP. The overall synthetic reaction is composed of two sequential steps, AdoMet formation and the subsequent tripolyphosphate hydrolysis which occurs prior to release of AdoMet from the enzyme.</text>
</comment>
<comment type="catalytic activity">
    <reaction evidence="1">
        <text>L-methionine + ATP + H2O = S-adenosyl-L-methionine + phosphate + diphosphate</text>
        <dbReference type="Rhea" id="RHEA:21080"/>
        <dbReference type="ChEBI" id="CHEBI:15377"/>
        <dbReference type="ChEBI" id="CHEBI:30616"/>
        <dbReference type="ChEBI" id="CHEBI:33019"/>
        <dbReference type="ChEBI" id="CHEBI:43474"/>
        <dbReference type="ChEBI" id="CHEBI:57844"/>
        <dbReference type="ChEBI" id="CHEBI:59789"/>
        <dbReference type="EC" id="2.5.1.6"/>
    </reaction>
</comment>
<comment type="cofactor">
    <cofactor evidence="1">
        <name>Mg(2+)</name>
        <dbReference type="ChEBI" id="CHEBI:18420"/>
    </cofactor>
    <text evidence="1">Binds 2 divalent ions per subunit.</text>
</comment>
<comment type="cofactor">
    <cofactor evidence="1">
        <name>K(+)</name>
        <dbReference type="ChEBI" id="CHEBI:29103"/>
    </cofactor>
    <text evidence="1">Binds 1 potassium ion per subunit.</text>
</comment>
<comment type="pathway">
    <text evidence="1">Amino-acid biosynthesis; S-adenosyl-L-methionine biosynthesis; S-adenosyl-L-methionine from L-methionine: step 1/1.</text>
</comment>
<comment type="subunit">
    <text evidence="1">Homotetramer; dimer of dimers.</text>
</comment>
<comment type="subcellular location">
    <subcellularLocation>
        <location evidence="1">Cytoplasm</location>
    </subcellularLocation>
</comment>
<comment type="similarity">
    <text evidence="1">Belongs to the AdoMet synthase family.</text>
</comment>
<evidence type="ECO:0000255" key="1">
    <source>
        <dbReference type="HAMAP-Rule" id="MF_00086"/>
    </source>
</evidence>
<dbReference type="EC" id="2.5.1.6" evidence="1"/>
<dbReference type="EMBL" id="CP000142">
    <property type="protein sequence ID" value="ABA89169.1"/>
    <property type="molecule type" value="Genomic_DNA"/>
</dbReference>
<dbReference type="SMR" id="Q3A388"/>
<dbReference type="STRING" id="338963.Pcar_1928"/>
<dbReference type="KEGG" id="pca:Pcar_1928"/>
<dbReference type="eggNOG" id="COG0192">
    <property type="taxonomic scope" value="Bacteria"/>
</dbReference>
<dbReference type="HOGENOM" id="CLU_041802_1_1_7"/>
<dbReference type="OrthoDB" id="9801686at2"/>
<dbReference type="UniPathway" id="UPA00315">
    <property type="reaction ID" value="UER00080"/>
</dbReference>
<dbReference type="Proteomes" id="UP000002534">
    <property type="component" value="Chromosome"/>
</dbReference>
<dbReference type="GO" id="GO:0005737">
    <property type="term" value="C:cytoplasm"/>
    <property type="evidence" value="ECO:0007669"/>
    <property type="project" value="UniProtKB-SubCell"/>
</dbReference>
<dbReference type="GO" id="GO:0005524">
    <property type="term" value="F:ATP binding"/>
    <property type="evidence" value="ECO:0007669"/>
    <property type="project" value="UniProtKB-UniRule"/>
</dbReference>
<dbReference type="GO" id="GO:0000287">
    <property type="term" value="F:magnesium ion binding"/>
    <property type="evidence" value="ECO:0007669"/>
    <property type="project" value="UniProtKB-UniRule"/>
</dbReference>
<dbReference type="GO" id="GO:0004478">
    <property type="term" value="F:methionine adenosyltransferase activity"/>
    <property type="evidence" value="ECO:0007669"/>
    <property type="project" value="UniProtKB-UniRule"/>
</dbReference>
<dbReference type="GO" id="GO:0006730">
    <property type="term" value="P:one-carbon metabolic process"/>
    <property type="evidence" value="ECO:0007669"/>
    <property type="project" value="UniProtKB-KW"/>
</dbReference>
<dbReference type="GO" id="GO:0006556">
    <property type="term" value="P:S-adenosylmethionine biosynthetic process"/>
    <property type="evidence" value="ECO:0007669"/>
    <property type="project" value="UniProtKB-UniRule"/>
</dbReference>
<dbReference type="CDD" id="cd18079">
    <property type="entry name" value="S-AdoMet_synt"/>
    <property type="match status" value="1"/>
</dbReference>
<dbReference type="FunFam" id="3.30.300.10:FF:000003">
    <property type="entry name" value="S-adenosylmethionine synthase"/>
    <property type="match status" value="1"/>
</dbReference>
<dbReference type="FunFam" id="3.30.300.10:FF:000004">
    <property type="entry name" value="S-adenosylmethionine synthase"/>
    <property type="match status" value="1"/>
</dbReference>
<dbReference type="Gene3D" id="3.30.300.10">
    <property type="match status" value="3"/>
</dbReference>
<dbReference type="HAMAP" id="MF_00086">
    <property type="entry name" value="S_AdoMet_synth1"/>
    <property type="match status" value="1"/>
</dbReference>
<dbReference type="InterPro" id="IPR022631">
    <property type="entry name" value="ADOMET_SYNTHASE_CS"/>
</dbReference>
<dbReference type="InterPro" id="IPR022630">
    <property type="entry name" value="S-AdoMet_synt_C"/>
</dbReference>
<dbReference type="InterPro" id="IPR022629">
    <property type="entry name" value="S-AdoMet_synt_central"/>
</dbReference>
<dbReference type="InterPro" id="IPR022628">
    <property type="entry name" value="S-AdoMet_synt_N"/>
</dbReference>
<dbReference type="InterPro" id="IPR002133">
    <property type="entry name" value="S-AdoMet_synthetase"/>
</dbReference>
<dbReference type="InterPro" id="IPR022636">
    <property type="entry name" value="S-AdoMet_synthetase_sfam"/>
</dbReference>
<dbReference type="NCBIfam" id="TIGR01034">
    <property type="entry name" value="metK"/>
    <property type="match status" value="1"/>
</dbReference>
<dbReference type="PANTHER" id="PTHR11964">
    <property type="entry name" value="S-ADENOSYLMETHIONINE SYNTHETASE"/>
    <property type="match status" value="1"/>
</dbReference>
<dbReference type="Pfam" id="PF02773">
    <property type="entry name" value="S-AdoMet_synt_C"/>
    <property type="match status" value="1"/>
</dbReference>
<dbReference type="Pfam" id="PF02772">
    <property type="entry name" value="S-AdoMet_synt_M"/>
    <property type="match status" value="1"/>
</dbReference>
<dbReference type="Pfam" id="PF00438">
    <property type="entry name" value="S-AdoMet_synt_N"/>
    <property type="match status" value="1"/>
</dbReference>
<dbReference type="PIRSF" id="PIRSF000497">
    <property type="entry name" value="MAT"/>
    <property type="match status" value="1"/>
</dbReference>
<dbReference type="SUPFAM" id="SSF55973">
    <property type="entry name" value="S-adenosylmethionine synthetase"/>
    <property type="match status" value="3"/>
</dbReference>
<dbReference type="PROSITE" id="PS00376">
    <property type="entry name" value="ADOMET_SYNTHASE_1"/>
    <property type="match status" value="1"/>
</dbReference>
<dbReference type="PROSITE" id="PS00377">
    <property type="entry name" value="ADOMET_SYNTHASE_2"/>
    <property type="match status" value="1"/>
</dbReference>